<protein>
    <recommendedName>
        <fullName>Primary amine oxidase</fullName>
        <ecNumber evidence="3">1.4.3.21</ecNumber>
    </recommendedName>
    <alternativeName>
        <fullName>Amine oxidase [copper-containing]</fullName>
    </alternativeName>
</protein>
<keyword id="KW-0186">Copper</keyword>
<keyword id="KW-0903">Direct protein sequencing</keyword>
<keyword id="KW-1015">Disulfide bond</keyword>
<keyword id="KW-0325">Glycoprotein</keyword>
<keyword id="KW-0479">Metal-binding</keyword>
<keyword id="KW-0560">Oxidoreductase</keyword>
<keyword id="KW-0732">Signal</keyword>
<keyword id="KW-0801">TPQ</keyword>
<accession>P49252</accession>
<accession>Q9LD03</accession>
<organism>
    <name type="scientific">Lens culinaris</name>
    <name type="common">Lentil</name>
    <name type="synonym">Cicer lens</name>
    <dbReference type="NCBI Taxonomy" id="3864"/>
    <lineage>
        <taxon>Eukaryota</taxon>
        <taxon>Viridiplantae</taxon>
        <taxon>Streptophyta</taxon>
        <taxon>Embryophyta</taxon>
        <taxon>Tracheophyta</taxon>
        <taxon>Spermatophyta</taxon>
        <taxon>Magnoliopsida</taxon>
        <taxon>eudicotyledons</taxon>
        <taxon>Gunneridae</taxon>
        <taxon>Pentapetalae</taxon>
        <taxon>rosids</taxon>
        <taxon>fabids</taxon>
        <taxon>Fabales</taxon>
        <taxon>Fabaceae</taxon>
        <taxon>Papilionoideae</taxon>
        <taxon>50 kb inversion clade</taxon>
        <taxon>NPAAA clade</taxon>
        <taxon>Hologalegina</taxon>
        <taxon>IRL clade</taxon>
        <taxon>Fabeae</taxon>
        <taxon>Lens</taxon>
    </lineage>
</organism>
<feature type="signal peptide" evidence="7">
    <location>
        <begin position="1" status="less than"/>
        <end position="18"/>
    </location>
</feature>
<feature type="chain" id="PRO_0000035679" description="Primary amine oxidase">
    <location>
        <begin position="19"/>
        <end position="667"/>
    </location>
</feature>
<feature type="region of interest" description="Disordered" evidence="6">
    <location>
        <begin position="216"/>
        <end position="246"/>
    </location>
</feature>
<feature type="compositionally biased region" description="Polar residues" evidence="6">
    <location>
        <begin position="218"/>
        <end position="229"/>
    </location>
</feature>
<feature type="active site" description="Proton acceptor" evidence="2">
    <location>
        <position position="318"/>
    </location>
</feature>
<feature type="active site" description="Schiff-base intermediate with substrate; via topaquinone" evidence="2">
    <location>
        <position position="405"/>
    </location>
</feature>
<feature type="binding site" evidence="2">
    <location>
        <begin position="316"/>
        <end position="327"/>
    </location>
    <ligand>
        <name>substrate</name>
    </ligand>
</feature>
<feature type="binding site" evidence="3">
    <location>
        <begin position="402"/>
        <end position="407"/>
    </location>
    <ligand>
        <name>substrate</name>
    </ligand>
</feature>
<feature type="binding site" evidence="2">
    <location>
        <position position="460"/>
    </location>
    <ligand>
        <name>Cu cation</name>
        <dbReference type="ChEBI" id="CHEBI:23378"/>
    </ligand>
</feature>
<feature type="binding site" evidence="2">
    <location>
        <position position="462"/>
    </location>
    <ligand>
        <name>Cu cation</name>
        <dbReference type="ChEBI" id="CHEBI:23378"/>
    </ligand>
</feature>
<feature type="binding site" evidence="4">
    <location>
        <position position="469"/>
    </location>
    <ligand>
        <name>Mn(2+)</name>
        <dbReference type="ChEBI" id="CHEBI:29035"/>
    </ligand>
</feature>
<feature type="binding site" evidence="4">
    <location>
        <position position="470"/>
    </location>
    <ligand>
        <name>Mn(2+)</name>
        <dbReference type="ChEBI" id="CHEBI:29035"/>
    </ligand>
</feature>
<feature type="binding site" evidence="4">
    <location>
        <position position="471"/>
    </location>
    <ligand>
        <name>Mn(2+)</name>
        <dbReference type="ChEBI" id="CHEBI:29035"/>
    </ligand>
</feature>
<feature type="binding site" evidence="4">
    <location>
        <position position="610"/>
    </location>
    <ligand>
        <name>Mn(2+)</name>
        <dbReference type="ChEBI" id="CHEBI:29035"/>
    </ligand>
</feature>
<feature type="binding site" evidence="4">
    <location>
        <position position="611"/>
    </location>
    <ligand>
        <name>Mn(2+)</name>
        <dbReference type="ChEBI" id="CHEBI:29035"/>
    </ligand>
</feature>
<feature type="binding site" evidence="2">
    <location>
        <position position="621"/>
    </location>
    <ligand>
        <name>Cu cation</name>
        <dbReference type="ChEBI" id="CHEBI:23378"/>
    </ligand>
</feature>
<feature type="modified residue" description="2',4',5'-topaquinone" evidence="2">
    <location>
        <position position="405"/>
    </location>
</feature>
<feature type="glycosylation site" description="N-linked (GlcNAc...) asparagine" evidence="5">
    <location>
        <position position="149"/>
    </location>
</feature>
<feature type="glycosylation site" description="N-linked (GlcNAc...) asparagine" evidence="5">
    <location>
        <position position="252"/>
    </location>
</feature>
<feature type="glycosylation site" description="N-linked (GlcNAc...) asparagine" evidence="5">
    <location>
        <position position="382"/>
    </location>
</feature>
<feature type="glycosylation site" description="N-linked (GlcNAc...) asparagine" evidence="5">
    <location>
        <position position="576"/>
    </location>
</feature>
<feature type="disulfide bond" evidence="1">
    <location>
        <begin position="155"/>
        <end position="176"/>
    </location>
</feature>
<feature type="disulfide bond" evidence="2">
    <location>
        <begin position="337"/>
        <end position="363"/>
    </location>
</feature>
<feature type="sequence conflict" description="In Ref. 1; CAA45526." evidence="8" ref="1">
    <original>GGSKR</original>
    <variation>EVQE</variation>
    <location>
        <begin position="492"/>
        <end position="496"/>
    </location>
</feature>
<feature type="sequence conflict" description="In Ref. 1; AA sequence." evidence="8" ref="1">
    <original>Y</original>
    <variation>N</variation>
    <location>
        <position position="575"/>
    </location>
</feature>
<feature type="sequence conflict" description="In Ref. 1; AA sequence." evidence="8" ref="1">
    <original>V</original>
    <variation>A</variation>
    <location>
        <position position="651"/>
    </location>
</feature>
<feature type="sequence conflict" description="In Ref. 1; AA sequence." evidence="8" ref="1">
    <original>R</original>
    <variation>I</variation>
    <location>
        <position position="658"/>
    </location>
</feature>
<feature type="non-terminal residue">
    <location>
        <position position="1"/>
    </location>
</feature>
<dbReference type="EC" id="1.4.3.21" evidence="3"/>
<dbReference type="EMBL" id="X64201">
    <property type="protein sequence ID" value="CAA45526.1"/>
    <property type="status" value="ALT_FRAME"/>
    <property type="molecule type" value="mRNA"/>
</dbReference>
<dbReference type="EMBL" id="S78994">
    <property type="protein sequence ID" value="AAB34918.3"/>
    <property type="molecule type" value="mRNA"/>
</dbReference>
<dbReference type="PIR" id="S21139">
    <property type="entry name" value="S21139"/>
</dbReference>
<dbReference type="SMR" id="P49252"/>
<dbReference type="KEGG" id="ag:AAB34918"/>
<dbReference type="BRENDA" id="1.4.3.21">
    <property type="organism ID" value="2969"/>
</dbReference>
<dbReference type="GO" id="GO:0005507">
    <property type="term" value="F:copper ion binding"/>
    <property type="evidence" value="ECO:0007669"/>
    <property type="project" value="InterPro"/>
</dbReference>
<dbReference type="GO" id="GO:0008131">
    <property type="term" value="F:primary methylamine oxidase activity"/>
    <property type="evidence" value="ECO:0007669"/>
    <property type="project" value="UniProtKB-EC"/>
</dbReference>
<dbReference type="GO" id="GO:0048038">
    <property type="term" value="F:quinone binding"/>
    <property type="evidence" value="ECO:0007669"/>
    <property type="project" value="InterPro"/>
</dbReference>
<dbReference type="GO" id="GO:0009308">
    <property type="term" value="P:amine metabolic process"/>
    <property type="evidence" value="ECO:0007669"/>
    <property type="project" value="InterPro"/>
</dbReference>
<dbReference type="FunFam" id="2.70.98.20:FF:000004">
    <property type="entry name" value="Amine oxidase"/>
    <property type="match status" value="1"/>
</dbReference>
<dbReference type="FunFam" id="3.10.450.40:FF:000005">
    <property type="entry name" value="Amine oxidase"/>
    <property type="match status" value="1"/>
</dbReference>
<dbReference type="FunFam" id="3.10.450.40:FF:000012">
    <property type="entry name" value="Amine oxidase"/>
    <property type="match status" value="1"/>
</dbReference>
<dbReference type="Gene3D" id="3.10.450.40">
    <property type="match status" value="2"/>
</dbReference>
<dbReference type="Gene3D" id="2.70.98.20">
    <property type="entry name" value="Copper amine oxidase, catalytic domain"/>
    <property type="match status" value="1"/>
</dbReference>
<dbReference type="InterPro" id="IPR049948">
    <property type="entry name" value="Cu_Am_ox_TPQ-bd"/>
</dbReference>
<dbReference type="InterPro" id="IPR000269">
    <property type="entry name" value="Cu_amine_oxidase"/>
</dbReference>
<dbReference type="InterPro" id="IPR015798">
    <property type="entry name" value="Cu_amine_oxidase_C"/>
</dbReference>
<dbReference type="InterPro" id="IPR036460">
    <property type="entry name" value="Cu_amine_oxidase_C_sf"/>
</dbReference>
<dbReference type="InterPro" id="IPR016182">
    <property type="entry name" value="Cu_amine_oxidase_N-reg"/>
</dbReference>
<dbReference type="InterPro" id="IPR015800">
    <property type="entry name" value="Cu_amine_oxidase_N2"/>
</dbReference>
<dbReference type="InterPro" id="IPR015802">
    <property type="entry name" value="Cu_amine_oxidase_N3"/>
</dbReference>
<dbReference type="PANTHER" id="PTHR10638:SF68">
    <property type="entry name" value="AMINE OXIDASE"/>
    <property type="match status" value="1"/>
</dbReference>
<dbReference type="PANTHER" id="PTHR10638">
    <property type="entry name" value="COPPER AMINE OXIDASE"/>
    <property type="match status" value="1"/>
</dbReference>
<dbReference type="Pfam" id="PF01179">
    <property type="entry name" value="Cu_amine_oxid"/>
    <property type="match status" value="1"/>
</dbReference>
<dbReference type="Pfam" id="PF02727">
    <property type="entry name" value="Cu_amine_oxidN2"/>
    <property type="match status" value="1"/>
</dbReference>
<dbReference type="Pfam" id="PF02728">
    <property type="entry name" value="Cu_amine_oxidN3"/>
    <property type="match status" value="1"/>
</dbReference>
<dbReference type="SUPFAM" id="SSF49998">
    <property type="entry name" value="Amine oxidase catalytic domain"/>
    <property type="match status" value="1"/>
</dbReference>
<dbReference type="SUPFAM" id="SSF54416">
    <property type="entry name" value="Amine oxidase N-terminal region"/>
    <property type="match status" value="2"/>
</dbReference>
<dbReference type="PROSITE" id="PS01164">
    <property type="entry name" value="COPPER_AMINE_OXID_1"/>
    <property type="match status" value="1"/>
</dbReference>
<comment type="catalytic activity">
    <reaction evidence="3">
        <text>a primary methyl amine + O2 + H2O = an aldehyde + H2O2 + NH4(+)</text>
        <dbReference type="Rhea" id="RHEA:16153"/>
        <dbReference type="ChEBI" id="CHEBI:15377"/>
        <dbReference type="ChEBI" id="CHEBI:15379"/>
        <dbReference type="ChEBI" id="CHEBI:16240"/>
        <dbReference type="ChEBI" id="CHEBI:17478"/>
        <dbReference type="ChEBI" id="CHEBI:28938"/>
        <dbReference type="ChEBI" id="CHEBI:228804"/>
        <dbReference type="EC" id="1.4.3.21"/>
    </reaction>
</comment>
<comment type="cofactor">
    <cofactor evidence="3">
        <name>Cu cation</name>
        <dbReference type="ChEBI" id="CHEBI:23378"/>
    </cofactor>
    <cofactor evidence="2">
        <name>Zn(2+)</name>
        <dbReference type="ChEBI" id="CHEBI:29105"/>
    </cofactor>
    <text evidence="2 3">Binds 1 copper ion per subunit (By similarity). Can also use zinc ion as cofactor (By similarity).</text>
</comment>
<comment type="cofactor">
    <cofactor evidence="3">
        <name>L-topaquinone</name>
        <dbReference type="ChEBI" id="CHEBI:79027"/>
    </cofactor>
    <text evidence="3">Contains 1 topaquinone per subunit.</text>
</comment>
<comment type="cofactor">
    <cofactor evidence="4">
        <name>Mn(2+)</name>
        <dbReference type="ChEBI" id="CHEBI:29035"/>
    </cofactor>
    <text evidence="4">Binds 1 Mn(2+) ion per subunit.</text>
</comment>
<comment type="subunit">
    <text evidence="3">Homodimer.</text>
</comment>
<comment type="PTM">
    <text>Glycosylated; contains two carbohydrate chains per monomer.</text>
</comment>
<comment type="PTM">
    <text evidence="3">Topaquinone (TPQ) is generated by copper-dependent autoxidation of a specific tyrosyl residue.</text>
</comment>
<comment type="similarity">
    <text evidence="8">Belongs to the copper/topaquinone oxidase family.</text>
</comment>
<comment type="sequence caution" evidence="8">
    <conflict type="frameshift">
        <sequence resource="EMBL-CDS" id="CAA45526"/>
    </conflict>
</comment>
<proteinExistence type="evidence at protein level"/>
<sequence length="667" mass="75558">KFALFSVLTLLSFHAVFSFTPLHTQHPLDPITKEEFLAVQTIVQNKYPISNNKLAFHYIGVDDPEKDLVLKYETSPTLISIPRKIFVVAIINSQTHEILIDLTIKSIVSDNIHNGYGFPVLSAAEQFLAIDLPLKYPPFIASVNKRGLNISEIVCSSFTMGWFGEEKNSRTVRVDCFMKESTVNIYVRPITGITIVADLDLMKIVEYHDRDTEAVPTAENTEYQVSKQSPPFGPKQHSLTSHQPQGPGFQINGTSVSWANWKFHIGFDVRAGIVISLASIYDLEKHKSRRVLYKGYISELFVPYQDPTEEFYFKTFFDSGEFGFGLSTVSLIPNRDCPPHAQFIDTYIHSADGTPIFLENAICVFEQYGNIMWRHTETGIPNESIEESRTEVDLAIRTVVTVGNYDNVLDWEFKTSGWMKPSIALSGILEIKGTNIKHKDEIKEEIHGKLVSANSIGIYHDHFYIYYLDFDIDGTQNSFEKTSLKTVRIVDGGSKRKSYWTTETQTAKTESDAKITIGLAPAELVVVNPNIKTAVGNEVGYRLIPAIPAHPLLTEDDYPQIRGAFTNYNVWVTPYNRTEKWAGGLYVDHSRGDDTLAVWTKKNREIVNKDIVMWHVVGIHHVPAQEDFPIMPLLSTSFELRPTNFFERNPVLKTLPPRDFTWPGCSN</sequence>
<evidence type="ECO:0000250" key="1"/>
<evidence type="ECO:0000250" key="2">
    <source>
        <dbReference type="UniProtKB" id="P12807"/>
    </source>
</evidence>
<evidence type="ECO:0000250" key="3">
    <source>
        <dbReference type="UniProtKB" id="P46883"/>
    </source>
</evidence>
<evidence type="ECO:0000250" key="4">
    <source>
        <dbReference type="UniProtKB" id="Q43077"/>
    </source>
</evidence>
<evidence type="ECO:0000255" key="5"/>
<evidence type="ECO:0000256" key="6">
    <source>
        <dbReference type="SAM" id="MobiDB-lite"/>
    </source>
</evidence>
<evidence type="ECO:0000269" key="7">
    <source>
    </source>
</evidence>
<evidence type="ECO:0000305" key="8"/>
<name>AMO_LENCU</name>
<reference key="1">
    <citation type="journal article" date="1992" name="FEBS Lett.">
        <title>cDNA-derived amino-acid sequence of lentil seedlings' amine oxidase.</title>
        <authorList>
            <person name="Rossi A."/>
            <person name="Petruzzelli R."/>
            <person name="Finazzi Agro A."/>
        </authorList>
    </citation>
    <scope>NUCLEOTIDE SEQUENCE [MRNA]</scope>
    <scope>PROTEIN SEQUENCE OF 19-66 AND 543-562</scope>
    <source>
        <tissue>Seedling</tissue>
    </source>
</reference>
<reference key="2">
    <citation type="journal article" date="1995" name="J. Biol. Chem.">
        <title>Cloning and molecular analysis of the pea seedling copper amine oxidase.</title>
        <authorList>
            <person name="Tipping A.J."/>
            <person name="McPherson M.J."/>
        </authorList>
    </citation>
    <scope>SEQUENCE REVISION TO 444-667</scope>
</reference>
<reference key="3">
    <citation type="submission" date="2001-09" db="EMBL/GenBank/DDBJ databases">
        <authorList>
            <person name="McPherson M.J."/>
        </authorList>
    </citation>
    <scope>NUCLEOTIDE SEQUENCE [MRNA]</scope>
</reference>
<reference key="4">
    <citation type="journal article" date="1992" name="Biochem. Soc. Trans.">
        <title>Copper-containing plant oxidases.</title>
        <authorList>
            <person name="Agro A.F."/>
            <person name="Rossi A."/>
        </authorList>
    </citation>
    <scope>PROTEIN SEQUENCE OF 24-35; 258-276 AND 360-377</scope>
</reference>